<gene>
    <name type="primary">ahpC</name>
    <name type="ordered locus">AXY_22000</name>
</gene>
<protein>
    <recommendedName>
        <fullName>Alkyl hydroperoxide reductase C</fullName>
        <ecNumber evidence="4">1.11.1.26</ecNumber>
    </recommendedName>
    <alternativeName>
        <fullName>Peroxiredoxin</fullName>
    </alternativeName>
    <alternativeName>
        <fullName>Thioredoxin peroxidase</fullName>
    </alternativeName>
</protein>
<sequence length="188" mass="20774">MSLIGTEVQPFRAQAFQSGKDFFEVTEADLKGKWSIVVFYPADFSFVCPTELEDVQKEYAELKKLGVEVYSVSTDTHFVHKAWHENSPAVGSIEYIMIGDPSQTISRQFDVLNEETGLADRGTFIIDPDGVIQAIEINADGIGRDASTLINKVKAAQYVRENPGEVCPAKWEEGGETLKPSLDIVGKI</sequence>
<accession>K0J4Q8</accession>
<accession>O87200</accession>
<reference key="1">
    <citation type="journal article" date="2000" name="J. Bacteriol.">
        <title>A hydrogen peroxide-forming NADH oxidase that functions as an alkyl hydroperoxide reductase in Amphibacillus xylanus.</title>
        <authorList>
            <person name="Niimura Y."/>
            <person name="Nishiyama Y."/>
            <person name="Saito D."/>
            <person name="Tsuji H."/>
            <person name="Hidaka M."/>
            <person name="Miyaji T."/>
            <person name="Watanabe T."/>
            <person name="Massey V."/>
        </authorList>
    </citation>
    <scope>NUCLEOTIDE SEQUENCE [GENOMIC DNA]</scope>
    <scope>PROTEIN SEQUENCE OF 2-13</scope>
    <scope>FUNCTION</scope>
    <scope>BIOPHYSICOCHEMICAL PROPERTIES</scope>
    <scope>SUBUNIT</scope>
    <scope>INDUCTION</scope>
    <source>
        <strain>ATCC 51415 / DSM 6626 / JCM 7361 / LMG 17667 / NBRC 15112 / Ep01</strain>
    </source>
</reference>
<reference key="2">
    <citation type="submission" date="2011-01" db="EMBL/GenBank/DDBJ databases">
        <title>Whole genome sequence of Amphibacillus xylinus NBRC 15112.</title>
        <authorList>
            <person name="Nakazawa H."/>
            <person name="Katano Y."/>
            <person name="Nakamura S."/>
            <person name="Sasagawa M."/>
            <person name="Fukada J."/>
            <person name="Arai T."/>
            <person name="Sasakura N."/>
            <person name="Mochizuki D."/>
            <person name="Hosoyama A."/>
            <person name="Harada K."/>
            <person name="Horikawa H."/>
            <person name="Kato Y."/>
            <person name="Harada T."/>
            <person name="Sasaki K."/>
            <person name="Sekiguchi M."/>
            <person name="Hodoyama M."/>
            <person name="Nishiko R."/>
            <person name="Narita H."/>
            <person name="Hanamaki A."/>
            <person name="Hata C."/>
            <person name="Konno Y."/>
            <person name="Niimura Y."/>
            <person name="Yamazaki S."/>
            <person name="Fujita N."/>
        </authorList>
    </citation>
    <scope>NUCLEOTIDE SEQUENCE [LARGE SCALE GENOMIC DNA]</scope>
    <source>
        <strain>ATCC 51415 / DSM 6626 / JCM 7361 / LMG 17667 / NBRC 15112 / Ep01</strain>
    </source>
</reference>
<reference key="3">
    <citation type="journal article" date="2005" name="Proteins">
        <title>Crystal structure of decameric peroxiredoxin (AhpC) from Amphibacillus xylanus.</title>
        <authorList>
            <person name="Kitano K."/>
            <person name="Kita A."/>
            <person name="Hakoshima T."/>
            <person name="Niimura Y."/>
            <person name="Miki K."/>
        </authorList>
    </citation>
    <scope>X-RAY CRYSTALLOGRAPHY (2.90 ANGSTROMS) OF 2-188</scope>
    <scope>DISULFIDE BONDS</scope>
</reference>
<organism>
    <name type="scientific">Amphibacillus xylanus (strain ATCC 51415 / DSM 6626 / JCM 7361 / LMG 17667 / NBRC 15112 / Ep01)</name>
    <dbReference type="NCBI Taxonomy" id="698758"/>
    <lineage>
        <taxon>Bacteria</taxon>
        <taxon>Bacillati</taxon>
        <taxon>Bacillota</taxon>
        <taxon>Bacilli</taxon>
        <taxon>Bacillales</taxon>
        <taxon>Bacillaceae</taxon>
        <taxon>Amphibacillus</taxon>
    </lineage>
</organism>
<name>AHPC_AMPXN</name>
<feature type="initiator methionine" description="Removed" evidence="4">
    <location>
        <position position="1"/>
    </location>
</feature>
<feature type="chain" id="PRO_0000441069" description="Alkyl hydroperoxide reductase C">
    <location>
        <begin position="2"/>
        <end position="188"/>
    </location>
</feature>
<feature type="domain" description="Thioredoxin" evidence="3">
    <location>
        <begin position="2"/>
        <end position="158"/>
    </location>
</feature>
<feature type="active site" description="Cysteine sulfenic acid (-SOH) intermediate" evidence="7">
    <location>
        <position position="48"/>
    </location>
</feature>
<feature type="disulfide bond" description="Interchain (with C-167); in linked form" evidence="5 8">
    <location>
        <position position="48"/>
    </location>
</feature>
<feature type="disulfide bond" description="Interchain (with C-48); in linked form" evidence="5 8">
    <location>
        <position position="167"/>
    </location>
</feature>
<feature type="strand" evidence="9">
    <location>
        <begin position="12"/>
        <end position="16"/>
    </location>
</feature>
<feature type="strand" evidence="9">
    <location>
        <begin position="18"/>
        <end position="20"/>
    </location>
</feature>
<feature type="strand" evidence="9">
    <location>
        <begin position="23"/>
        <end position="26"/>
    </location>
</feature>
<feature type="turn" evidence="9">
    <location>
        <begin position="27"/>
        <end position="30"/>
    </location>
</feature>
<feature type="strand" evidence="9">
    <location>
        <begin position="31"/>
        <end position="39"/>
    </location>
</feature>
<feature type="helix" evidence="9">
    <location>
        <begin position="50"/>
        <end position="64"/>
    </location>
</feature>
<feature type="strand" evidence="9">
    <location>
        <begin position="67"/>
        <end position="75"/>
    </location>
</feature>
<feature type="helix" evidence="9">
    <location>
        <begin position="77"/>
        <end position="85"/>
    </location>
</feature>
<feature type="helix" evidence="9">
    <location>
        <begin position="88"/>
        <end position="91"/>
    </location>
</feature>
<feature type="strand" evidence="9">
    <location>
        <begin position="95"/>
        <end position="99"/>
    </location>
</feature>
<feature type="helix" evidence="9">
    <location>
        <begin position="104"/>
        <end position="108"/>
    </location>
</feature>
<feature type="turn" evidence="9">
    <location>
        <begin position="114"/>
        <end position="117"/>
    </location>
</feature>
<feature type="strand" evidence="9">
    <location>
        <begin position="121"/>
        <end position="126"/>
    </location>
</feature>
<feature type="strand" evidence="9">
    <location>
        <begin position="130"/>
        <end position="138"/>
    </location>
</feature>
<feature type="helix" evidence="9">
    <location>
        <begin position="148"/>
        <end position="160"/>
    </location>
</feature>
<comment type="function">
    <text evidence="4">Thiol-specific peroxidase that catalyzes the reduction of hydrogen peroxide and organic hydroperoxides to water and alcohols, respectively. Plays a role in cell protection against oxidative stress by detoxifying peroxides.</text>
</comment>
<comment type="catalytic activity">
    <reaction evidence="4">
        <text>a hydroperoxide + NADH + H(+) = an alcohol + NAD(+) + H2O</text>
        <dbReference type="Rhea" id="RHEA:62628"/>
        <dbReference type="ChEBI" id="CHEBI:15377"/>
        <dbReference type="ChEBI" id="CHEBI:15378"/>
        <dbReference type="ChEBI" id="CHEBI:30879"/>
        <dbReference type="ChEBI" id="CHEBI:35924"/>
        <dbReference type="ChEBI" id="CHEBI:57540"/>
        <dbReference type="ChEBI" id="CHEBI:57945"/>
        <dbReference type="EC" id="1.11.1.26"/>
    </reaction>
</comment>
<comment type="biophysicochemical properties">
    <kinetics>
        <KM evidence="4">8.9 uM for H(2)O(2)</KM>
        <KM evidence="4">10 uM for cumene hydroperoxide</KM>
    </kinetics>
</comment>
<comment type="subunit">
    <text evidence="4 5">Homodimer; disulfide-linked, upon oxidation (PubMed:10960086, PubMed:15770647). 5 homodimers assemble to form a ring-like decamer (PubMed:15770647).</text>
</comment>
<comment type="subcellular location">
    <subcellularLocation>
        <location evidence="2">Cytoplasm</location>
    </subcellularLocation>
</comment>
<comment type="induction">
    <text evidence="4">Induced significantly under aerobic conditions.</text>
</comment>
<comment type="miscellaneous">
    <text evidence="1 7">The active site is a conserved redox-active cysteine residue, the peroxidatic cysteine (C(P)), which makes the nucleophilic attack on the peroxide substrate. The peroxide oxidizes the C(P)-SH to cysteine sulfenic acid (C(P)-SOH), which then reacts with another cysteine residue, the resolving cysteine (C(R)), to form a disulfide bridge. The disulfide is subsequently reduced by an appropriate electron donor to complete the catalytic cycle. In this typical 2-Cys peroxiredoxin, C(R) is provided by the other dimeric subunit to form an intersubunit disulfide (PubMed:15770647). The disulfide is subsequently reduced by AhpF (By similarity).</text>
</comment>
<comment type="similarity">
    <text evidence="6">Belongs to the peroxiredoxin family. AhpC/Prx1 subfamily.</text>
</comment>
<evidence type="ECO:0000250" key="1">
    <source>
        <dbReference type="UniProtKB" id="P0A251"/>
    </source>
</evidence>
<evidence type="ECO:0000250" key="2">
    <source>
        <dbReference type="UniProtKB" id="P0AE08"/>
    </source>
</evidence>
<evidence type="ECO:0000255" key="3">
    <source>
        <dbReference type="PROSITE-ProRule" id="PRU00691"/>
    </source>
</evidence>
<evidence type="ECO:0000269" key="4">
    <source>
    </source>
</evidence>
<evidence type="ECO:0000269" key="5">
    <source>
    </source>
</evidence>
<evidence type="ECO:0000305" key="6"/>
<evidence type="ECO:0000305" key="7">
    <source>
    </source>
</evidence>
<evidence type="ECO:0007744" key="8">
    <source>
        <dbReference type="PDB" id="1WE0"/>
    </source>
</evidence>
<evidence type="ECO:0007829" key="9">
    <source>
        <dbReference type="PDB" id="1WE0"/>
    </source>
</evidence>
<dbReference type="EC" id="1.11.1.26" evidence="4"/>
<dbReference type="EMBL" id="AB018435">
    <property type="protein sequence ID" value="BAA33808.1"/>
    <property type="molecule type" value="Genomic_DNA"/>
</dbReference>
<dbReference type="EMBL" id="AP012050">
    <property type="protein sequence ID" value="BAM48332.1"/>
    <property type="molecule type" value="Genomic_DNA"/>
</dbReference>
<dbReference type="RefSeq" id="WP_015010915.1">
    <property type="nucleotide sequence ID" value="NC_018704.1"/>
</dbReference>
<dbReference type="PDB" id="1WE0">
    <property type="method" value="X-ray"/>
    <property type="resolution" value="2.90 A"/>
    <property type="chains" value="A/B/C/D/E/F/G/H/I/J=2-188"/>
</dbReference>
<dbReference type="PDBsum" id="1WE0"/>
<dbReference type="SMR" id="K0J4Q8"/>
<dbReference type="STRING" id="698758.AXY_22000"/>
<dbReference type="PeroxiBase" id="4918">
    <property type="entry name" value="AxAhpC"/>
</dbReference>
<dbReference type="KEGG" id="axl:AXY_22000"/>
<dbReference type="PATRIC" id="fig|698758.3.peg.2211"/>
<dbReference type="eggNOG" id="COG0450">
    <property type="taxonomic scope" value="Bacteria"/>
</dbReference>
<dbReference type="HOGENOM" id="CLU_042529_21_3_9"/>
<dbReference type="OrthoDB" id="9812811at2"/>
<dbReference type="EvolutionaryTrace" id="K0J4Q8"/>
<dbReference type="Proteomes" id="UP000006294">
    <property type="component" value="Chromosome"/>
</dbReference>
<dbReference type="GO" id="GO:0005829">
    <property type="term" value="C:cytosol"/>
    <property type="evidence" value="ECO:0007669"/>
    <property type="project" value="TreeGrafter"/>
</dbReference>
<dbReference type="GO" id="GO:0102039">
    <property type="term" value="F:NADH-dependent peroxiredoxin activity"/>
    <property type="evidence" value="ECO:0007669"/>
    <property type="project" value="UniProtKB-EC"/>
</dbReference>
<dbReference type="GO" id="GO:0008379">
    <property type="term" value="F:thioredoxin peroxidase activity"/>
    <property type="evidence" value="ECO:0007669"/>
    <property type="project" value="TreeGrafter"/>
</dbReference>
<dbReference type="GO" id="GO:0045454">
    <property type="term" value="P:cell redox homeostasis"/>
    <property type="evidence" value="ECO:0007669"/>
    <property type="project" value="TreeGrafter"/>
</dbReference>
<dbReference type="GO" id="GO:0033554">
    <property type="term" value="P:cellular response to stress"/>
    <property type="evidence" value="ECO:0007669"/>
    <property type="project" value="TreeGrafter"/>
</dbReference>
<dbReference type="GO" id="GO:0042744">
    <property type="term" value="P:hydrogen peroxide catabolic process"/>
    <property type="evidence" value="ECO:0007669"/>
    <property type="project" value="TreeGrafter"/>
</dbReference>
<dbReference type="GO" id="GO:0006979">
    <property type="term" value="P:response to oxidative stress"/>
    <property type="evidence" value="ECO:0007669"/>
    <property type="project" value="InterPro"/>
</dbReference>
<dbReference type="CDD" id="cd03015">
    <property type="entry name" value="PRX_Typ2cys"/>
    <property type="match status" value="1"/>
</dbReference>
<dbReference type="FunFam" id="3.40.30.10:FF:000002">
    <property type="entry name" value="Alkyl hydroperoxide reductase C"/>
    <property type="match status" value="1"/>
</dbReference>
<dbReference type="Gene3D" id="3.40.30.10">
    <property type="entry name" value="Glutaredoxin"/>
    <property type="match status" value="1"/>
</dbReference>
<dbReference type="InterPro" id="IPR017559">
    <property type="entry name" value="AhpC"/>
</dbReference>
<dbReference type="InterPro" id="IPR000866">
    <property type="entry name" value="AhpC/TSA"/>
</dbReference>
<dbReference type="InterPro" id="IPR050217">
    <property type="entry name" value="Peroxiredoxin"/>
</dbReference>
<dbReference type="InterPro" id="IPR024706">
    <property type="entry name" value="Peroxiredoxin_AhpC-typ"/>
</dbReference>
<dbReference type="InterPro" id="IPR019479">
    <property type="entry name" value="Peroxiredoxin_C"/>
</dbReference>
<dbReference type="InterPro" id="IPR036249">
    <property type="entry name" value="Thioredoxin-like_sf"/>
</dbReference>
<dbReference type="InterPro" id="IPR013766">
    <property type="entry name" value="Thioredoxin_domain"/>
</dbReference>
<dbReference type="NCBIfam" id="TIGR03137">
    <property type="entry name" value="AhpC"/>
    <property type="match status" value="1"/>
</dbReference>
<dbReference type="PANTHER" id="PTHR10681:SF121">
    <property type="entry name" value="ALKYL HYDROPEROXIDE REDUCTASE C"/>
    <property type="match status" value="1"/>
</dbReference>
<dbReference type="PANTHER" id="PTHR10681">
    <property type="entry name" value="THIOREDOXIN PEROXIDASE"/>
    <property type="match status" value="1"/>
</dbReference>
<dbReference type="Pfam" id="PF10417">
    <property type="entry name" value="1-cysPrx_C"/>
    <property type="match status" value="1"/>
</dbReference>
<dbReference type="Pfam" id="PF00578">
    <property type="entry name" value="AhpC-TSA"/>
    <property type="match status" value="1"/>
</dbReference>
<dbReference type="PIRSF" id="PIRSF000239">
    <property type="entry name" value="AHPC"/>
    <property type="match status" value="1"/>
</dbReference>
<dbReference type="SUPFAM" id="SSF52833">
    <property type="entry name" value="Thioredoxin-like"/>
    <property type="match status" value="1"/>
</dbReference>
<dbReference type="PROSITE" id="PS51352">
    <property type="entry name" value="THIOREDOXIN_2"/>
    <property type="match status" value="1"/>
</dbReference>
<keyword id="KW-0002">3D-structure</keyword>
<keyword id="KW-0049">Antioxidant</keyword>
<keyword id="KW-0963">Cytoplasm</keyword>
<keyword id="KW-0903">Direct protein sequencing</keyword>
<keyword id="KW-1015">Disulfide bond</keyword>
<keyword id="KW-0560">Oxidoreductase</keyword>
<keyword id="KW-0575">Peroxidase</keyword>
<keyword id="KW-0676">Redox-active center</keyword>
<keyword id="KW-1185">Reference proteome</keyword>
<proteinExistence type="evidence at protein level"/>